<dbReference type="EMBL" id="AB024713">
    <property type="protein sequence ID" value="BAA78781.1"/>
    <property type="molecule type" value="mRNA"/>
</dbReference>
<dbReference type="EMBL" id="AB025354">
    <property type="protein sequence ID" value="BAA78782.1"/>
    <property type="molecule type" value="Genomic_DNA"/>
</dbReference>
<dbReference type="EMBL" id="AB014471">
    <property type="protein sequence ID" value="BAA28603.1"/>
    <property type="molecule type" value="Genomic_DNA"/>
</dbReference>
<dbReference type="CCDS" id="CCDS24903.1"/>
<dbReference type="FunCoup" id="Q9R0Q9">
    <property type="interactions" value="1591"/>
</dbReference>
<dbReference type="STRING" id="10090.ENSMUSP00000018905"/>
<dbReference type="GlyGen" id="Q9R0Q9">
    <property type="glycosylation" value="1 site, 1 O-linked glycan (1 site)"/>
</dbReference>
<dbReference type="PhosphoSitePlus" id="Q9R0Q9"/>
<dbReference type="SwissPalm" id="Q9R0Q9"/>
<dbReference type="jPOST" id="Q9R0Q9"/>
<dbReference type="PaxDb" id="10090-ENSMUSP00000018905"/>
<dbReference type="ProteomicsDB" id="290308"/>
<dbReference type="Pumba" id="Q9R0Q9"/>
<dbReference type="UCSC" id="uc007jqw.2">
    <property type="organism name" value="mouse"/>
</dbReference>
<dbReference type="AGR" id="MGI:1346040"/>
<dbReference type="MGI" id="MGI:1346040">
    <property type="gene designation" value="Mpdu1"/>
</dbReference>
<dbReference type="eggNOG" id="KOG3211">
    <property type="taxonomic scope" value="Eukaryota"/>
</dbReference>
<dbReference type="InParanoid" id="Q9R0Q9"/>
<dbReference type="OrthoDB" id="271506at2759"/>
<dbReference type="PhylomeDB" id="Q9R0Q9"/>
<dbReference type="Reactome" id="R-MMU-446193">
    <property type="pathway name" value="Biosynthesis of the N-glycan precursor (dolichol lipid-linked oligosaccharide, LLO) and transfer to a nascent protein"/>
</dbReference>
<dbReference type="ChiTaRS" id="Mpdu1">
    <property type="organism name" value="mouse"/>
</dbReference>
<dbReference type="PRO" id="PR:Q9R0Q9"/>
<dbReference type="Proteomes" id="UP000000589">
    <property type="component" value="Unplaced"/>
</dbReference>
<dbReference type="RNAct" id="Q9R0Q9">
    <property type="molecule type" value="protein"/>
</dbReference>
<dbReference type="GO" id="GO:0016020">
    <property type="term" value="C:membrane"/>
    <property type="evidence" value="ECO:0007669"/>
    <property type="project" value="UniProtKB-SubCell"/>
</dbReference>
<dbReference type="FunFam" id="1.20.1280.290:FF:000031">
    <property type="entry name" value="Mannose-P-dolichol utilization defect 1"/>
    <property type="match status" value="1"/>
</dbReference>
<dbReference type="FunFam" id="1.20.1280.290:FF:000006">
    <property type="entry name" value="mannose-P-dolichol utilization defect 1 protein"/>
    <property type="match status" value="1"/>
</dbReference>
<dbReference type="Gene3D" id="1.20.1280.290">
    <property type="match status" value="2"/>
</dbReference>
<dbReference type="InterPro" id="IPR016817">
    <property type="entry name" value="MannP-dilichol_defect-1"/>
</dbReference>
<dbReference type="InterPro" id="IPR006603">
    <property type="entry name" value="PQ-loop_rpt"/>
</dbReference>
<dbReference type="PANTHER" id="PTHR12226">
    <property type="entry name" value="MANNOSE-P-DOLICHOL UTILIZATION DEFECT 1 LEC35 -RELATED"/>
    <property type="match status" value="1"/>
</dbReference>
<dbReference type="PANTHER" id="PTHR12226:SF2">
    <property type="entry name" value="MANNOSE-P-DOLICHOL UTILIZATION DEFECT 1 PROTEIN"/>
    <property type="match status" value="1"/>
</dbReference>
<dbReference type="Pfam" id="PF04193">
    <property type="entry name" value="PQ-loop"/>
    <property type="match status" value="2"/>
</dbReference>
<dbReference type="PIRSF" id="PIRSF023381">
    <property type="entry name" value="MannP-dilichol_defect-1p"/>
    <property type="match status" value="1"/>
</dbReference>
<dbReference type="SMART" id="SM00679">
    <property type="entry name" value="CTNS"/>
    <property type="match status" value="2"/>
</dbReference>
<comment type="function">
    <text evidence="1">Required for normal utilization of mannose-dolichol phosphate (Dol-P-Man) in the synthesis of N-linked and O-linked oligosaccharides and GPI anchors.</text>
</comment>
<comment type="subcellular location">
    <subcellularLocation>
        <location evidence="4">Membrane</location>
        <topology evidence="4">Multi-pass membrane protein</topology>
    </subcellularLocation>
</comment>
<comment type="similarity">
    <text evidence="4">Belongs to the MPDU1 (TC 2.A.43.3) family.</text>
</comment>
<proteinExistence type="evidence at protein level"/>
<accession>Q9R0Q9</accession>
<accession>O70203</accession>
<accession>Q9R0P7</accession>
<keyword id="KW-0007">Acetylation</keyword>
<keyword id="KW-0472">Membrane</keyword>
<keyword id="KW-1185">Reference proteome</keyword>
<keyword id="KW-0677">Repeat</keyword>
<keyword id="KW-0812">Transmembrane</keyword>
<keyword id="KW-1133">Transmembrane helix</keyword>
<keyword id="KW-0813">Transport</keyword>
<name>MPU1_MOUSE</name>
<feature type="initiator methionine" description="Removed" evidence="2">
    <location>
        <position position="1"/>
    </location>
</feature>
<feature type="chain" id="PRO_0000221035" description="Mannose-P-dolichol utilization defect 1 protein">
    <location>
        <begin position="2"/>
        <end position="247"/>
    </location>
</feature>
<feature type="transmembrane region" description="Helical" evidence="3">
    <location>
        <begin position="37"/>
        <end position="57"/>
    </location>
</feature>
<feature type="transmembrane region" description="Helical" evidence="3">
    <location>
        <begin position="74"/>
        <end position="94"/>
    </location>
</feature>
<feature type="transmembrane region" description="Helical" evidence="3">
    <location>
        <begin position="100"/>
        <end position="120"/>
    </location>
</feature>
<feature type="transmembrane region" description="Helical" evidence="3">
    <location>
        <begin position="128"/>
        <end position="145"/>
    </location>
</feature>
<feature type="transmembrane region" description="Helical" evidence="3">
    <location>
        <begin position="151"/>
        <end position="171"/>
    </location>
</feature>
<feature type="transmembrane region" description="Helical" evidence="3">
    <location>
        <begin position="185"/>
        <end position="205"/>
    </location>
</feature>
<feature type="transmembrane region" description="Helical" evidence="3">
    <location>
        <begin position="213"/>
        <end position="233"/>
    </location>
</feature>
<feature type="domain" description="PQ-loop 1">
    <location>
        <begin position="39"/>
        <end position="105"/>
    </location>
</feature>
<feature type="domain" description="PQ-loop 2">
    <location>
        <begin position="159"/>
        <end position="216"/>
    </location>
</feature>
<feature type="modified residue" description="N-acetylalanine" evidence="2">
    <location>
        <position position="2"/>
    </location>
</feature>
<feature type="sequence conflict" description="In Ref. 2; BAA28603." evidence="4" ref="2">
    <original>L</original>
    <variation>V</variation>
    <location>
        <position position="148"/>
    </location>
</feature>
<feature type="sequence conflict" description="In Ref. 2; BAA28603." evidence="4" ref="2">
    <original>L</original>
    <variation>LL</variation>
    <location>
        <position position="171"/>
    </location>
</feature>
<evidence type="ECO:0000250" key="1"/>
<evidence type="ECO:0000250" key="2">
    <source>
        <dbReference type="UniProtKB" id="O75352"/>
    </source>
</evidence>
<evidence type="ECO:0000255" key="3"/>
<evidence type="ECO:0000305" key="4"/>
<gene>
    <name type="primary">Mpdu1</name>
    <name type="synonym">Supl15h</name>
</gene>
<protein>
    <recommendedName>
        <fullName>Mannose-P-dolichol utilization defect 1 protein</fullName>
    </recommendedName>
    <alternativeName>
        <fullName>Suppressor of Lec15 and Lec35 glycosylation mutation homolog</fullName>
        <shortName>SL15</shortName>
    </alternativeName>
</protein>
<reference key="1">
    <citation type="journal article" date="1999" name="Gene">
        <title>Five different genes, Eif4a1, Cd68, Supl15h, Sox15 and Fxr2h, are clustered in a 40 kb region of mouse chromosome 11.</title>
        <authorList>
            <person name="Miyashita A."/>
            <person name="Shimizu N."/>
            <person name="Endo N."/>
            <person name="Hanyuu T."/>
            <person name="Ishii N."/>
            <person name="Ito K."/>
            <person name="Itoh Y."/>
            <person name="Shirai M."/>
            <person name="Nakajima T."/>
            <person name="Odani S."/>
            <person name="Kuwano R."/>
        </authorList>
    </citation>
    <scope>NUCLEOTIDE SEQUENCE [GENOMIC DNA / MRNA]</scope>
    <source>
        <strain>Swiss Webster / NIH</strain>
        <tissue>Embryo</tissue>
    </source>
</reference>
<reference key="2">
    <citation type="submission" date="1998-05" db="EMBL/GenBank/DDBJ databases">
        <authorList>
            <person name="Miyashita A."/>
            <person name="Shimizu N."/>
            <person name="Odani S."/>
            <person name="Nakajima T."/>
            <person name="Kuwano R."/>
        </authorList>
    </citation>
    <scope>NUCLEOTIDE SEQUENCE [GENOMIC DNA]</scope>
    <source>
        <strain>129</strain>
    </source>
</reference>
<reference key="3">
    <citation type="journal article" date="2010" name="Cell">
        <title>A tissue-specific atlas of mouse protein phosphorylation and expression.</title>
        <authorList>
            <person name="Huttlin E.L."/>
            <person name="Jedrychowski M.P."/>
            <person name="Elias J.E."/>
            <person name="Goswami T."/>
            <person name="Rad R."/>
            <person name="Beausoleil S.A."/>
            <person name="Villen J."/>
            <person name="Haas W."/>
            <person name="Sowa M.E."/>
            <person name="Gygi S.P."/>
        </authorList>
    </citation>
    <scope>IDENTIFICATION BY MASS SPECTROMETRY [LARGE SCALE ANALYSIS]</scope>
    <source>
        <tissue>Brown adipose tissue</tissue>
        <tissue>Kidney</tissue>
        <tissue>Liver</tissue>
        <tissue>Lung</tissue>
        <tissue>Pancreas</tissue>
        <tissue>Spleen</tissue>
        <tissue>Testis</tissue>
    </source>
</reference>
<organism>
    <name type="scientific">Mus musculus</name>
    <name type="common">Mouse</name>
    <dbReference type="NCBI Taxonomy" id="10090"/>
    <lineage>
        <taxon>Eukaryota</taxon>
        <taxon>Metazoa</taxon>
        <taxon>Chordata</taxon>
        <taxon>Craniata</taxon>
        <taxon>Vertebrata</taxon>
        <taxon>Euteleostomi</taxon>
        <taxon>Mammalia</taxon>
        <taxon>Eutheria</taxon>
        <taxon>Euarchontoglires</taxon>
        <taxon>Glires</taxon>
        <taxon>Rodentia</taxon>
        <taxon>Myomorpha</taxon>
        <taxon>Muroidea</taxon>
        <taxon>Muridae</taxon>
        <taxon>Murinae</taxon>
        <taxon>Mus</taxon>
        <taxon>Mus</taxon>
    </lineage>
</organism>
<sequence>MAGEADGRFKGLLVPILLPEKCYDQLFVQWDLLHVPCLKILLSKGLGLGIVAGSLLVKLPQVFKLLGAKSAEGLSLQSVMLELVALTGTVVYSITNNFPFSSWGEALFLTLQTVAICFLVMHYRGETVKGVAFLACYAMVLLALLSPLTPLAVVTLLQASNVPAVVVGKLLQAATNYRNGHTGQLSAITVFMLFGGSLARIFTSVQETGDPLMAGVFVVSSLCNGLIAAQVLFYWNAKAPHKQKKEQ</sequence>